<feature type="chain" id="PRO_0000438499" description="Acyl-CoA 5-desaturase AL21">
    <location>
        <begin position="1"/>
        <end position="321"/>
    </location>
</feature>
<feature type="transmembrane region" description="Helical" evidence="2">
    <location>
        <begin position="42"/>
        <end position="62"/>
    </location>
</feature>
<feature type="transmembrane region" description="Helical" evidence="2">
    <location>
        <begin position="64"/>
        <end position="84"/>
    </location>
</feature>
<feature type="transmembrane region" description="Helical" evidence="2">
    <location>
        <begin position="190"/>
        <end position="210"/>
    </location>
</feature>
<feature type="short sequence motif" description="Histidine box-1" evidence="1">
    <location>
        <begin position="87"/>
        <end position="92"/>
    </location>
</feature>
<feature type="short sequence motif" description="Histidine box-2" evidence="1">
    <location>
        <begin position="124"/>
        <end position="128"/>
    </location>
</feature>
<feature type="short sequence motif" description="Histidine box-3" evidence="1">
    <location>
        <begin position="256"/>
        <end position="260"/>
    </location>
</feature>
<feature type="binding site" evidence="1">
    <location>
        <position position="87"/>
    </location>
    <ligand>
        <name>Fe cation</name>
        <dbReference type="ChEBI" id="CHEBI:24875"/>
        <label>1</label>
    </ligand>
</feature>
<feature type="binding site" evidence="1">
    <location>
        <position position="92"/>
    </location>
    <ligand>
        <name>Fe cation</name>
        <dbReference type="ChEBI" id="CHEBI:24875"/>
        <label>1</label>
    </ligand>
</feature>
<feature type="binding site" evidence="1">
    <location>
        <position position="124"/>
    </location>
    <ligand>
        <name>Fe cation</name>
        <dbReference type="ChEBI" id="CHEBI:24875"/>
        <label>1</label>
    </ligand>
</feature>
<feature type="binding site" evidence="1">
    <location>
        <position position="127"/>
    </location>
    <ligand>
        <name>Fe cation</name>
        <dbReference type="ChEBI" id="CHEBI:24875"/>
        <label>2</label>
    </ligand>
</feature>
<feature type="binding site" evidence="1">
    <location>
        <position position="128"/>
    </location>
    <ligand>
        <name>Fe cation</name>
        <dbReference type="ChEBI" id="CHEBI:24875"/>
        <label>1</label>
    </ligand>
</feature>
<feature type="binding site" evidence="1">
    <location>
        <position position="227"/>
    </location>
    <ligand>
        <name>Fe cation</name>
        <dbReference type="ChEBI" id="CHEBI:24875"/>
        <label>2</label>
    </ligand>
</feature>
<feature type="binding site" evidence="1">
    <location>
        <position position="256"/>
    </location>
    <ligand>
        <name>Fe cation</name>
        <dbReference type="ChEBI" id="CHEBI:24875"/>
        <label>2</label>
    </ligand>
</feature>
<feature type="binding site" evidence="1">
    <location>
        <position position="259"/>
    </location>
    <ligand>
        <name>Fe cation</name>
        <dbReference type="ChEBI" id="CHEBI:24875"/>
        <label>1</label>
    </ligand>
</feature>
<feature type="binding site" evidence="1">
    <location>
        <position position="260"/>
    </location>
    <ligand>
        <name>Fe cation</name>
        <dbReference type="ChEBI" id="CHEBI:24875"/>
        <label>2</label>
    </ligand>
</feature>
<organism>
    <name type="scientific">Anemone leveillei</name>
    <name type="common">Windflower</name>
    <dbReference type="NCBI Taxonomy" id="212809"/>
    <lineage>
        <taxon>Eukaryota</taxon>
        <taxon>Viridiplantae</taxon>
        <taxon>Streptophyta</taxon>
        <taxon>Embryophyta</taxon>
        <taxon>Tracheophyta</taxon>
        <taxon>Spermatophyta</taxon>
        <taxon>Magnoliopsida</taxon>
        <taxon>Ranunculales</taxon>
        <taxon>Ranunculaceae</taxon>
        <taxon>Ranunculoideae</taxon>
        <taxon>Anemoneae</taxon>
        <taxon>Anemone</taxon>
    </lineage>
</organism>
<gene>
    <name evidence="4" type="primary">AL21</name>
</gene>
<proteinExistence type="evidence at protein level"/>
<dbReference type="EC" id="1.14.19.37" evidence="3"/>
<dbReference type="SMR" id="P0DOW3"/>
<dbReference type="UniPathway" id="UPA00658"/>
<dbReference type="GO" id="GO:0005789">
    <property type="term" value="C:endoplasmic reticulum membrane"/>
    <property type="evidence" value="ECO:0007669"/>
    <property type="project" value="TreeGrafter"/>
</dbReference>
<dbReference type="GO" id="GO:0046872">
    <property type="term" value="F:metal ion binding"/>
    <property type="evidence" value="ECO:0007669"/>
    <property type="project" value="UniProtKB-KW"/>
</dbReference>
<dbReference type="GO" id="GO:0016717">
    <property type="term" value="F:oxidoreductase activity, acting on paired donors, with oxidation of a pair of donors resulting in the reduction of molecular oxygen to two molecules of water"/>
    <property type="evidence" value="ECO:0007669"/>
    <property type="project" value="InterPro"/>
</dbReference>
<dbReference type="GO" id="GO:0006636">
    <property type="term" value="P:unsaturated fatty acid biosynthetic process"/>
    <property type="evidence" value="ECO:0007669"/>
    <property type="project" value="UniProtKB-UniPathway"/>
</dbReference>
<dbReference type="GO" id="GO:0042761">
    <property type="term" value="P:very long-chain fatty acid biosynthetic process"/>
    <property type="evidence" value="ECO:0007669"/>
    <property type="project" value="TreeGrafter"/>
</dbReference>
<dbReference type="CDD" id="cd03505">
    <property type="entry name" value="Delta9-FADS-like"/>
    <property type="match status" value="1"/>
</dbReference>
<dbReference type="InterPro" id="IPR015876">
    <property type="entry name" value="Acyl-CoA_DS"/>
</dbReference>
<dbReference type="InterPro" id="IPR005804">
    <property type="entry name" value="FA_desaturase_dom"/>
</dbReference>
<dbReference type="PANTHER" id="PTHR11351">
    <property type="entry name" value="ACYL-COA DESATURASE"/>
    <property type="match status" value="1"/>
</dbReference>
<dbReference type="PANTHER" id="PTHR11351:SF31">
    <property type="entry name" value="DESATURASE 1, ISOFORM A-RELATED"/>
    <property type="match status" value="1"/>
</dbReference>
<dbReference type="Pfam" id="PF00487">
    <property type="entry name" value="FA_desaturase"/>
    <property type="match status" value="1"/>
</dbReference>
<dbReference type="PRINTS" id="PR00075">
    <property type="entry name" value="FACDDSATRASE"/>
</dbReference>
<keyword id="KW-0275">Fatty acid biosynthesis</keyword>
<keyword id="KW-0276">Fatty acid metabolism</keyword>
<keyword id="KW-0408">Iron</keyword>
<keyword id="KW-0444">Lipid biosynthesis</keyword>
<keyword id="KW-0443">Lipid metabolism</keyword>
<keyword id="KW-0472">Membrane</keyword>
<keyword id="KW-0479">Metal-binding</keyword>
<keyword id="KW-0560">Oxidoreductase</keyword>
<keyword id="KW-0812">Transmembrane</keyword>
<keyword id="KW-1133">Transmembrane helix</keyword>
<accession>P0DOW3</accession>
<reference key="1">
    <citation type="journal article" date="2007" name="Plant Physiol.">
        <title>Cloning and characterization of unusual fatty acid desaturases from Anemone leveillei: identification of an acyl-coenzyme A C20 Delta5-desaturase responsible for the synthesis of sciadonic acid.</title>
        <authorList>
            <person name="Sayanova O."/>
            <person name="Haslam R."/>
            <person name="Venegas Caleron M."/>
            <person name="Napier J.A."/>
        </authorList>
    </citation>
    <scope>NUCLEOTIDE SEQUENCE [GENOMIC DNA]</scope>
    <scope>FUNCTION</scope>
    <scope>CATALYTIC ACTIVITY</scope>
    <scope>PATHWAY</scope>
</reference>
<protein>
    <recommendedName>
        <fullName evidence="5">Acyl-CoA 5-desaturase AL21</fullName>
        <ecNumber evidence="3">1.14.19.37</ecNumber>
    </recommendedName>
    <alternativeName>
        <fullName evidence="4">Acyl-CoA 5-desaturase (non-methylene-interrupted)</fullName>
    </alternativeName>
</protein>
<name>AL21_ANELE</name>
<evidence type="ECO:0000250" key="1">
    <source>
        <dbReference type="UniProtKB" id="O00767"/>
    </source>
</evidence>
<evidence type="ECO:0000255" key="2"/>
<evidence type="ECO:0000269" key="3">
    <source>
    </source>
</evidence>
<evidence type="ECO:0000303" key="4">
    <source>
    </source>
</evidence>
<evidence type="ECO:0000305" key="5"/>
<comment type="function">
    <text evidence="3">Catalyzes the desaturation of 20:2Delta(11,14) and 20:3Delta(11,14,17) to generate sciadonic acid (20:3Delta(5,11,14)) and juniperonic acid (20:4Delta(5,11,14,17)). The enzyme can also use 16:0 and 18:0 as substrates.</text>
</comment>
<comment type="catalytic activity">
    <reaction evidence="3">
        <text>(11Z,14Z)-eicosadienoyl-CoA + AH2 + O2 = (5Z,11Z,14Z)-eicosatrienoyl-CoA + A + 2 H2O</text>
        <dbReference type="Rhea" id="RHEA:42160"/>
        <dbReference type="ChEBI" id="CHEBI:13193"/>
        <dbReference type="ChEBI" id="CHEBI:15377"/>
        <dbReference type="ChEBI" id="CHEBI:15379"/>
        <dbReference type="ChEBI" id="CHEBI:17499"/>
        <dbReference type="ChEBI" id="CHEBI:76410"/>
        <dbReference type="ChEBI" id="CHEBI:78663"/>
        <dbReference type="EC" id="1.14.19.37"/>
    </reaction>
</comment>
<comment type="catalytic activity">
    <reaction evidence="3">
        <text>(11Z,14Z,17Z)-eicosatrienoyl-CoA + AH2 + O2 = (5Z,11Z,14Z,17Z)-eicosatetraenoyl-CoA + A + 2 H2O</text>
        <dbReference type="Rhea" id="RHEA:42164"/>
        <dbReference type="ChEBI" id="CHEBI:13193"/>
        <dbReference type="ChEBI" id="CHEBI:15377"/>
        <dbReference type="ChEBI" id="CHEBI:15379"/>
        <dbReference type="ChEBI" id="CHEBI:17499"/>
        <dbReference type="ChEBI" id="CHEBI:74328"/>
        <dbReference type="ChEBI" id="CHEBI:78664"/>
        <dbReference type="EC" id="1.14.19.37"/>
    </reaction>
</comment>
<comment type="cofactor">
    <cofactor evidence="1">
        <name>Fe(2+)</name>
        <dbReference type="ChEBI" id="CHEBI:29033"/>
    </cofactor>
    <text evidence="1">Expected to bind 2 Fe(2+) ions per subunit.</text>
</comment>
<comment type="pathway">
    <text evidence="3">Lipid metabolism; polyunsaturated fatty acid biosynthesis.</text>
</comment>
<comment type="subcellular location">
    <subcellularLocation>
        <location evidence="2">Membrane</location>
        <topology evidence="2">Multi-pass membrane protein</topology>
    </subcellularLocation>
</comment>
<comment type="domain">
    <text evidence="1">The histidine box domains are involved in binding the catalytic metal ions.</text>
</comment>
<comment type="similarity">
    <text evidence="5">Belongs to the fatty acid desaturase type 1 family.</text>
</comment>
<sequence>MELPAMALQSELKQDKFPSSDVPVKDKTKKITWVRVWNSTDIFHIILVGGLHVLCLSAPFTFSWSAFWLSLTLYAVCGVFGTTLSYHRNLTHRSFKLPKYLEYFFAYVGLHALQGDPVWWVSTHRYHHKFTDTYLDPHSPIEGFWFSHIFWLFDSKYILEECGRYENAGDLLKQSYYRFLERTFVFHVYLQAALLYMFGGFPFIVWGMAVRTVWGFHASWLVNSVCHRYGHQAWDTGDLSTNNWFIAMLTSGEGWHNNHHAFEYSARHGIEWWQIDTTWYVIKLLEYLGLATDVKVPSEVHKRKMSFKNCVQDKQFCVNDK</sequence>